<accession>P16196</accession>
<dbReference type="EMBL" id="M30633">
    <property type="protein sequence ID" value="AAA43734.1"/>
    <property type="molecule type" value="Genomic_RNA"/>
</dbReference>
<dbReference type="PIR" id="I36825">
    <property type="entry name" value="I36825"/>
</dbReference>
<dbReference type="GlyCosmos" id="P16196">
    <property type="glycosylation" value="2 sites, No reported glycans"/>
</dbReference>
<dbReference type="GO" id="GO:0033644">
    <property type="term" value="C:host cell membrane"/>
    <property type="evidence" value="ECO:0007669"/>
    <property type="project" value="UniProtKB-KW"/>
</dbReference>
<dbReference type="GO" id="GO:0016020">
    <property type="term" value="C:membrane"/>
    <property type="evidence" value="ECO:0007669"/>
    <property type="project" value="UniProtKB-KW"/>
</dbReference>
<dbReference type="GO" id="GO:0055036">
    <property type="term" value="C:virion membrane"/>
    <property type="evidence" value="ECO:0007669"/>
    <property type="project" value="UniProtKB-SubCell"/>
</dbReference>
<dbReference type="GO" id="GO:0015267">
    <property type="term" value="F:channel activity"/>
    <property type="evidence" value="ECO:0007669"/>
    <property type="project" value="UniProtKB-KW"/>
</dbReference>
<dbReference type="GO" id="GO:1902600">
    <property type="term" value="P:proton transmembrane transport"/>
    <property type="evidence" value="ECO:0007669"/>
    <property type="project" value="UniProtKB-KW"/>
</dbReference>
<dbReference type="InterPro" id="IPR007288">
    <property type="entry name" value="InfluenzaB_glycoprotein_NB"/>
</dbReference>
<dbReference type="Pfam" id="PF04159">
    <property type="entry name" value="NB"/>
    <property type="match status" value="1"/>
</dbReference>
<evidence type="ECO:0000250" key="1"/>
<evidence type="ECO:0000255" key="2"/>
<evidence type="ECO:0000305" key="3"/>
<gene>
    <name type="primary">NB</name>
</gene>
<comment type="function">
    <text evidence="1">Putative viral proton channel. May play a role in virus entry (By similarity).</text>
</comment>
<comment type="subunit">
    <text evidence="1">Dimer.</text>
</comment>
<comment type="subcellular location">
    <subcellularLocation>
        <location evidence="3">Virion membrane</location>
        <topology evidence="3">Single-pass type III membrane protein</topology>
    </subcellularLocation>
</comment>
<comment type="similarity">
    <text evidence="3">Belongs to the influenza viruses type B glycoprotein NB family.</text>
</comment>
<keyword id="KW-0325">Glycoprotein</keyword>
<keyword id="KW-0375">Hydrogen ion transport</keyword>
<keyword id="KW-0407">Ion channel</keyword>
<keyword id="KW-0406">Ion transport</keyword>
<keyword id="KW-0472">Membrane</keyword>
<keyword id="KW-0735">Signal-anchor</keyword>
<keyword id="KW-0812">Transmembrane</keyword>
<keyword id="KW-1133">Transmembrane helix</keyword>
<keyword id="KW-0813">Transport</keyword>
<keyword id="KW-1182">Viral ion channel</keyword>
<keyword id="KW-0946">Virion</keyword>
<protein>
    <recommendedName>
        <fullName>Glycoprotein NB</fullName>
    </recommendedName>
</protein>
<feature type="chain" id="PRO_0000078908" description="Glycoprotein NB">
    <location>
        <begin position="1"/>
        <end position="100"/>
    </location>
</feature>
<feature type="topological domain" description="Virion surface" evidence="2">
    <location>
        <begin position="1"/>
        <end position="18"/>
    </location>
</feature>
<feature type="transmembrane region" description="Helical; Signal-anchor for type III membrane protein" evidence="2">
    <location>
        <begin position="19"/>
        <end position="40"/>
    </location>
</feature>
<feature type="topological domain" description="Intravirion" evidence="2">
    <location>
        <begin position="41"/>
        <end position="100"/>
    </location>
</feature>
<feature type="glycosylation site" description="N-linked (GlcNAc...) asparagine; by host" evidence="2">
    <location>
        <position position="3"/>
    </location>
</feature>
<feature type="glycosylation site" description="N-linked (GlcNAc...) asparagine; by host" evidence="2">
    <location>
        <position position="7"/>
    </location>
</feature>
<proteinExistence type="inferred from homology"/>
<sequence>MNNATFNYTNVNPISHIRGSIIITICVSFTVILIVFGHIAKIFTNKKNCTNNVIRVRERIKCSGCEPFCNKRDDISSPRARVDIPSFILPGLNLSESTPN</sequence>
<reference key="1">
    <citation type="journal article" date="1990" name="Virology">
        <title>Antigenic, sequence, and crystal variation in influenza B neuraminidase.</title>
        <authorList>
            <person name="Air G.M."/>
            <person name="Laver W.G."/>
            <person name="Luo M."/>
            <person name="Stray S.J."/>
            <person name="Legrone G."/>
            <person name="Webster R.G."/>
        </authorList>
    </citation>
    <scope>NUCLEOTIDE SEQUENCE [GENOMIC RNA]</scope>
</reference>
<organismHost>
    <name type="scientific">Homo sapiens</name>
    <name type="common">Human</name>
    <dbReference type="NCBI Taxonomy" id="9606"/>
</organismHost>
<organism>
    <name type="scientific">Influenza B virus (strain B/Maryland/1959)</name>
    <dbReference type="NCBI Taxonomy" id="11537"/>
    <lineage>
        <taxon>Viruses</taxon>
        <taxon>Riboviria</taxon>
        <taxon>Orthornavirae</taxon>
        <taxon>Negarnaviricota</taxon>
        <taxon>Polyploviricotina</taxon>
        <taxon>Insthoviricetes</taxon>
        <taxon>Articulavirales</taxon>
        <taxon>Orthomyxoviridae</taxon>
        <taxon>Betainfluenzavirus</taxon>
        <taxon>Betainfluenzavirus influenzae</taxon>
        <taxon>Influenza B virus</taxon>
    </lineage>
</organism>
<name>VNB_INBMD</name>